<gene>
    <name evidence="1" type="primary">bioB</name>
    <name type="ordered locus">ECED1_0739</name>
</gene>
<reference key="1">
    <citation type="journal article" date="2009" name="PLoS Genet.">
        <title>Organised genome dynamics in the Escherichia coli species results in highly diverse adaptive paths.</title>
        <authorList>
            <person name="Touchon M."/>
            <person name="Hoede C."/>
            <person name="Tenaillon O."/>
            <person name="Barbe V."/>
            <person name="Baeriswyl S."/>
            <person name="Bidet P."/>
            <person name="Bingen E."/>
            <person name="Bonacorsi S."/>
            <person name="Bouchier C."/>
            <person name="Bouvet O."/>
            <person name="Calteau A."/>
            <person name="Chiapello H."/>
            <person name="Clermont O."/>
            <person name="Cruveiller S."/>
            <person name="Danchin A."/>
            <person name="Diard M."/>
            <person name="Dossat C."/>
            <person name="Karoui M.E."/>
            <person name="Frapy E."/>
            <person name="Garry L."/>
            <person name="Ghigo J.M."/>
            <person name="Gilles A.M."/>
            <person name="Johnson J."/>
            <person name="Le Bouguenec C."/>
            <person name="Lescat M."/>
            <person name="Mangenot S."/>
            <person name="Martinez-Jehanne V."/>
            <person name="Matic I."/>
            <person name="Nassif X."/>
            <person name="Oztas S."/>
            <person name="Petit M.A."/>
            <person name="Pichon C."/>
            <person name="Rouy Z."/>
            <person name="Ruf C.S."/>
            <person name="Schneider D."/>
            <person name="Tourret J."/>
            <person name="Vacherie B."/>
            <person name="Vallenet D."/>
            <person name="Medigue C."/>
            <person name="Rocha E.P.C."/>
            <person name="Denamur E."/>
        </authorList>
    </citation>
    <scope>NUCLEOTIDE SEQUENCE [LARGE SCALE GENOMIC DNA]</scope>
    <source>
        <strain>ED1a</strain>
    </source>
</reference>
<organism>
    <name type="scientific">Escherichia coli O81 (strain ED1a)</name>
    <dbReference type="NCBI Taxonomy" id="585397"/>
    <lineage>
        <taxon>Bacteria</taxon>
        <taxon>Pseudomonadati</taxon>
        <taxon>Pseudomonadota</taxon>
        <taxon>Gammaproteobacteria</taxon>
        <taxon>Enterobacterales</taxon>
        <taxon>Enterobacteriaceae</taxon>
        <taxon>Escherichia</taxon>
    </lineage>
</organism>
<comment type="function">
    <text evidence="1">Catalyzes the conversion of dethiobiotin (DTB) to biotin by the insertion of a sulfur atom into dethiobiotin via a radical-based mechanism.</text>
</comment>
<comment type="catalytic activity">
    <reaction evidence="1">
        <text>(4R,5S)-dethiobiotin + (sulfur carrier)-SH + 2 reduced [2Fe-2S]-[ferredoxin] + 2 S-adenosyl-L-methionine = (sulfur carrier)-H + biotin + 2 5'-deoxyadenosine + 2 L-methionine + 2 oxidized [2Fe-2S]-[ferredoxin]</text>
        <dbReference type="Rhea" id="RHEA:22060"/>
        <dbReference type="Rhea" id="RHEA-COMP:10000"/>
        <dbReference type="Rhea" id="RHEA-COMP:10001"/>
        <dbReference type="Rhea" id="RHEA-COMP:14737"/>
        <dbReference type="Rhea" id="RHEA-COMP:14739"/>
        <dbReference type="ChEBI" id="CHEBI:17319"/>
        <dbReference type="ChEBI" id="CHEBI:29917"/>
        <dbReference type="ChEBI" id="CHEBI:33737"/>
        <dbReference type="ChEBI" id="CHEBI:33738"/>
        <dbReference type="ChEBI" id="CHEBI:57586"/>
        <dbReference type="ChEBI" id="CHEBI:57844"/>
        <dbReference type="ChEBI" id="CHEBI:59789"/>
        <dbReference type="ChEBI" id="CHEBI:64428"/>
        <dbReference type="ChEBI" id="CHEBI:149473"/>
        <dbReference type="EC" id="2.8.1.6"/>
    </reaction>
</comment>
<comment type="cofactor">
    <cofactor evidence="1">
        <name>[4Fe-4S] cluster</name>
        <dbReference type="ChEBI" id="CHEBI:49883"/>
    </cofactor>
    <text evidence="1">Binds 1 [4Fe-4S] cluster. The cluster is coordinated with 3 cysteines and an exchangeable S-adenosyl-L-methionine.</text>
</comment>
<comment type="cofactor">
    <cofactor evidence="1">
        <name>[2Fe-2S] cluster</name>
        <dbReference type="ChEBI" id="CHEBI:190135"/>
    </cofactor>
    <text evidence="1">Binds 1 [2Fe-2S] cluster. The cluster is coordinated with 3 cysteines and 1 arginine.</text>
</comment>
<comment type="pathway">
    <text evidence="1">Cofactor biosynthesis; biotin biosynthesis; biotin from 7,8-diaminononanoate: step 2/2.</text>
</comment>
<comment type="subunit">
    <text evidence="1">Homodimer.</text>
</comment>
<comment type="similarity">
    <text evidence="1">Belongs to the radical SAM superfamily. Biotin synthase family.</text>
</comment>
<keyword id="KW-0001">2Fe-2S</keyword>
<keyword id="KW-0004">4Fe-4S</keyword>
<keyword id="KW-0093">Biotin biosynthesis</keyword>
<keyword id="KW-0408">Iron</keyword>
<keyword id="KW-0411">Iron-sulfur</keyword>
<keyword id="KW-0479">Metal-binding</keyword>
<keyword id="KW-0949">S-adenosyl-L-methionine</keyword>
<keyword id="KW-0808">Transferase</keyword>
<feature type="chain" id="PRO_0000381362" description="Biotin synthase">
    <location>
        <begin position="1"/>
        <end position="346"/>
    </location>
</feature>
<feature type="domain" description="Radical SAM core" evidence="2">
    <location>
        <begin position="38"/>
        <end position="256"/>
    </location>
</feature>
<feature type="binding site" evidence="1">
    <location>
        <position position="53"/>
    </location>
    <ligand>
        <name>[4Fe-4S] cluster</name>
        <dbReference type="ChEBI" id="CHEBI:49883"/>
        <note>4Fe-4S-S-AdoMet</note>
    </ligand>
</feature>
<feature type="binding site" evidence="1">
    <location>
        <position position="57"/>
    </location>
    <ligand>
        <name>[4Fe-4S] cluster</name>
        <dbReference type="ChEBI" id="CHEBI:49883"/>
        <note>4Fe-4S-S-AdoMet</note>
    </ligand>
</feature>
<feature type="binding site" evidence="1">
    <location>
        <position position="60"/>
    </location>
    <ligand>
        <name>[4Fe-4S] cluster</name>
        <dbReference type="ChEBI" id="CHEBI:49883"/>
        <note>4Fe-4S-S-AdoMet</note>
    </ligand>
</feature>
<feature type="binding site" evidence="1">
    <location>
        <position position="97"/>
    </location>
    <ligand>
        <name>[2Fe-2S] cluster</name>
        <dbReference type="ChEBI" id="CHEBI:190135"/>
    </ligand>
</feature>
<feature type="binding site" evidence="1">
    <location>
        <position position="128"/>
    </location>
    <ligand>
        <name>[2Fe-2S] cluster</name>
        <dbReference type="ChEBI" id="CHEBI:190135"/>
    </ligand>
</feature>
<feature type="binding site" evidence="1">
    <location>
        <position position="188"/>
    </location>
    <ligand>
        <name>[2Fe-2S] cluster</name>
        <dbReference type="ChEBI" id="CHEBI:190135"/>
    </ligand>
</feature>
<feature type="binding site" evidence="1">
    <location>
        <position position="260"/>
    </location>
    <ligand>
        <name>[2Fe-2S] cluster</name>
        <dbReference type="ChEBI" id="CHEBI:190135"/>
    </ligand>
</feature>
<evidence type="ECO:0000255" key="1">
    <source>
        <dbReference type="HAMAP-Rule" id="MF_01694"/>
    </source>
</evidence>
<evidence type="ECO:0000255" key="2">
    <source>
        <dbReference type="PROSITE-ProRule" id="PRU01266"/>
    </source>
</evidence>
<proteinExistence type="inferred from homology"/>
<name>BIOB_ECO81</name>
<protein>
    <recommendedName>
        <fullName evidence="1">Biotin synthase</fullName>
        <ecNumber evidence="1">2.8.1.6</ecNumber>
    </recommendedName>
</protein>
<accession>B7MQM8</accession>
<dbReference type="EC" id="2.8.1.6" evidence="1"/>
<dbReference type="EMBL" id="CU928162">
    <property type="protein sequence ID" value="CAR06944.1"/>
    <property type="molecule type" value="Genomic_DNA"/>
</dbReference>
<dbReference type="RefSeq" id="WP_000951218.1">
    <property type="nucleotide sequence ID" value="NC_011745.1"/>
</dbReference>
<dbReference type="SMR" id="B7MQM8"/>
<dbReference type="KEGG" id="ecq:ECED1_0739"/>
<dbReference type="HOGENOM" id="CLU_033172_1_2_6"/>
<dbReference type="UniPathway" id="UPA00078">
    <property type="reaction ID" value="UER00162"/>
</dbReference>
<dbReference type="Proteomes" id="UP000000748">
    <property type="component" value="Chromosome"/>
</dbReference>
<dbReference type="GO" id="GO:0051537">
    <property type="term" value="F:2 iron, 2 sulfur cluster binding"/>
    <property type="evidence" value="ECO:0007669"/>
    <property type="project" value="UniProtKB-KW"/>
</dbReference>
<dbReference type="GO" id="GO:0051539">
    <property type="term" value="F:4 iron, 4 sulfur cluster binding"/>
    <property type="evidence" value="ECO:0007669"/>
    <property type="project" value="UniProtKB-KW"/>
</dbReference>
<dbReference type="GO" id="GO:0004076">
    <property type="term" value="F:biotin synthase activity"/>
    <property type="evidence" value="ECO:0007669"/>
    <property type="project" value="UniProtKB-UniRule"/>
</dbReference>
<dbReference type="GO" id="GO:0005506">
    <property type="term" value="F:iron ion binding"/>
    <property type="evidence" value="ECO:0007669"/>
    <property type="project" value="UniProtKB-UniRule"/>
</dbReference>
<dbReference type="GO" id="GO:0009102">
    <property type="term" value="P:biotin biosynthetic process"/>
    <property type="evidence" value="ECO:0007669"/>
    <property type="project" value="UniProtKB-UniRule"/>
</dbReference>
<dbReference type="CDD" id="cd01335">
    <property type="entry name" value="Radical_SAM"/>
    <property type="match status" value="1"/>
</dbReference>
<dbReference type="FunFam" id="3.20.20.70:FF:000011">
    <property type="entry name" value="Biotin synthase"/>
    <property type="match status" value="1"/>
</dbReference>
<dbReference type="Gene3D" id="3.20.20.70">
    <property type="entry name" value="Aldolase class I"/>
    <property type="match status" value="1"/>
</dbReference>
<dbReference type="HAMAP" id="MF_01694">
    <property type="entry name" value="BioB"/>
    <property type="match status" value="1"/>
</dbReference>
<dbReference type="InterPro" id="IPR013785">
    <property type="entry name" value="Aldolase_TIM"/>
</dbReference>
<dbReference type="InterPro" id="IPR010722">
    <property type="entry name" value="BATS_dom"/>
</dbReference>
<dbReference type="InterPro" id="IPR002684">
    <property type="entry name" value="Biotin_synth/BioAB"/>
</dbReference>
<dbReference type="InterPro" id="IPR024177">
    <property type="entry name" value="Biotin_synthase"/>
</dbReference>
<dbReference type="InterPro" id="IPR006638">
    <property type="entry name" value="Elp3/MiaA/NifB-like_rSAM"/>
</dbReference>
<dbReference type="InterPro" id="IPR007197">
    <property type="entry name" value="rSAM"/>
</dbReference>
<dbReference type="NCBIfam" id="TIGR00433">
    <property type="entry name" value="bioB"/>
    <property type="match status" value="1"/>
</dbReference>
<dbReference type="PANTHER" id="PTHR22976">
    <property type="entry name" value="BIOTIN SYNTHASE"/>
    <property type="match status" value="1"/>
</dbReference>
<dbReference type="PANTHER" id="PTHR22976:SF2">
    <property type="entry name" value="BIOTIN SYNTHASE, MITOCHONDRIAL"/>
    <property type="match status" value="1"/>
</dbReference>
<dbReference type="Pfam" id="PF06968">
    <property type="entry name" value="BATS"/>
    <property type="match status" value="1"/>
</dbReference>
<dbReference type="Pfam" id="PF04055">
    <property type="entry name" value="Radical_SAM"/>
    <property type="match status" value="1"/>
</dbReference>
<dbReference type="PIRSF" id="PIRSF001619">
    <property type="entry name" value="Biotin_synth"/>
    <property type="match status" value="1"/>
</dbReference>
<dbReference type="SFLD" id="SFLDG01060">
    <property type="entry name" value="BATS_domain_containing"/>
    <property type="match status" value="1"/>
</dbReference>
<dbReference type="SFLD" id="SFLDF00272">
    <property type="entry name" value="biotin_synthase"/>
    <property type="match status" value="1"/>
</dbReference>
<dbReference type="SMART" id="SM00876">
    <property type="entry name" value="BATS"/>
    <property type="match status" value="1"/>
</dbReference>
<dbReference type="SMART" id="SM00729">
    <property type="entry name" value="Elp3"/>
    <property type="match status" value="1"/>
</dbReference>
<dbReference type="SUPFAM" id="SSF102114">
    <property type="entry name" value="Radical SAM enzymes"/>
    <property type="match status" value="1"/>
</dbReference>
<dbReference type="PROSITE" id="PS51918">
    <property type="entry name" value="RADICAL_SAM"/>
    <property type="match status" value="1"/>
</dbReference>
<sequence>MAHRPRWTLSQVTELFEKPLLDLLFEAQQVHRQHFDPRQVQVSTLLSIKTGACPEDCKYCPQSSRYKTGLEAERLMEVEQVLESARKAKAAGSTRFCMGAAWKNPHERDMPYLEQMVQGVKAMGLEACMTLGTLSESQAQRLANAGLDYYNHNLDTSPEFYGNIITTRTYQERLDTLEKVREAGIKVCSGGIVGLGETVKDRAGLLLQLANLPTPPESVPINMLVKVKGTPLADNDDVDAFDFIRTIAVARIMMPTSYVRLSAGREQMNEQTQAMCFMAGANSIFYGCKLLTTPNPEEDKDLQLFRKLGLNPQQTAVLAGDNEQQQRLEQALMTPDTDEYYNAAAL</sequence>